<organism>
    <name type="scientific">Mus musculus</name>
    <name type="common">Mouse</name>
    <dbReference type="NCBI Taxonomy" id="10090"/>
    <lineage>
        <taxon>Eukaryota</taxon>
        <taxon>Metazoa</taxon>
        <taxon>Chordata</taxon>
        <taxon>Craniata</taxon>
        <taxon>Vertebrata</taxon>
        <taxon>Euteleostomi</taxon>
        <taxon>Mammalia</taxon>
        <taxon>Eutheria</taxon>
        <taxon>Euarchontoglires</taxon>
        <taxon>Glires</taxon>
        <taxon>Rodentia</taxon>
        <taxon>Myomorpha</taxon>
        <taxon>Muroidea</taxon>
        <taxon>Muridae</taxon>
        <taxon>Murinae</taxon>
        <taxon>Mus</taxon>
        <taxon>Mus</taxon>
    </lineage>
</organism>
<reference key="1">
    <citation type="journal article" date="2005" name="Science">
        <title>The transcriptional landscape of the mammalian genome.</title>
        <authorList>
            <person name="Carninci P."/>
            <person name="Kasukawa T."/>
            <person name="Katayama S."/>
            <person name="Gough J."/>
            <person name="Frith M.C."/>
            <person name="Maeda N."/>
            <person name="Oyama R."/>
            <person name="Ravasi T."/>
            <person name="Lenhard B."/>
            <person name="Wells C."/>
            <person name="Kodzius R."/>
            <person name="Shimokawa K."/>
            <person name="Bajic V.B."/>
            <person name="Brenner S.E."/>
            <person name="Batalov S."/>
            <person name="Forrest A.R."/>
            <person name="Zavolan M."/>
            <person name="Davis M.J."/>
            <person name="Wilming L.G."/>
            <person name="Aidinis V."/>
            <person name="Allen J.E."/>
            <person name="Ambesi-Impiombato A."/>
            <person name="Apweiler R."/>
            <person name="Aturaliya R.N."/>
            <person name="Bailey T.L."/>
            <person name="Bansal M."/>
            <person name="Baxter L."/>
            <person name="Beisel K.W."/>
            <person name="Bersano T."/>
            <person name="Bono H."/>
            <person name="Chalk A.M."/>
            <person name="Chiu K.P."/>
            <person name="Choudhary V."/>
            <person name="Christoffels A."/>
            <person name="Clutterbuck D.R."/>
            <person name="Crowe M.L."/>
            <person name="Dalla E."/>
            <person name="Dalrymple B.P."/>
            <person name="de Bono B."/>
            <person name="Della Gatta G."/>
            <person name="di Bernardo D."/>
            <person name="Down T."/>
            <person name="Engstrom P."/>
            <person name="Fagiolini M."/>
            <person name="Faulkner G."/>
            <person name="Fletcher C.F."/>
            <person name="Fukushima T."/>
            <person name="Furuno M."/>
            <person name="Futaki S."/>
            <person name="Gariboldi M."/>
            <person name="Georgii-Hemming P."/>
            <person name="Gingeras T.R."/>
            <person name="Gojobori T."/>
            <person name="Green R.E."/>
            <person name="Gustincich S."/>
            <person name="Harbers M."/>
            <person name="Hayashi Y."/>
            <person name="Hensch T.K."/>
            <person name="Hirokawa N."/>
            <person name="Hill D."/>
            <person name="Huminiecki L."/>
            <person name="Iacono M."/>
            <person name="Ikeo K."/>
            <person name="Iwama A."/>
            <person name="Ishikawa T."/>
            <person name="Jakt M."/>
            <person name="Kanapin A."/>
            <person name="Katoh M."/>
            <person name="Kawasawa Y."/>
            <person name="Kelso J."/>
            <person name="Kitamura H."/>
            <person name="Kitano H."/>
            <person name="Kollias G."/>
            <person name="Krishnan S.P."/>
            <person name="Kruger A."/>
            <person name="Kummerfeld S.K."/>
            <person name="Kurochkin I.V."/>
            <person name="Lareau L.F."/>
            <person name="Lazarevic D."/>
            <person name="Lipovich L."/>
            <person name="Liu J."/>
            <person name="Liuni S."/>
            <person name="McWilliam S."/>
            <person name="Madan Babu M."/>
            <person name="Madera M."/>
            <person name="Marchionni L."/>
            <person name="Matsuda H."/>
            <person name="Matsuzawa S."/>
            <person name="Miki H."/>
            <person name="Mignone F."/>
            <person name="Miyake S."/>
            <person name="Morris K."/>
            <person name="Mottagui-Tabar S."/>
            <person name="Mulder N."/>
            <person name="Nakano N."/>
            <person name="Nakauchi H."/>
            <person name="Ng P."/>
            <person name="Nilsson R."/>
            <person name="Nishiguchi S."/>
            <person name="Nishikawa S."/>
            <person name="Nori F."/>
            <person name="Ohara O."/>
            <person name="Okazaki Y."/>
            <person name="Orlando V."/>
            <person name="Pang K.C."/>
            <person name="Pavan W.J."/>
            <person name="Pavesi G."/>
            <person name="Pesole G."/>
            <person name="Petrovsky N."/>
            <person name="Piazza S."/>
            <person name="Reed J."/>
            <person name="Reid J.F."/>
            <person name="Ring B.Z."/>
            <person name="Ringwald M."/>
            <person name="Rost B."/>
            <person name="Ruan Y."/>
            <person name="Salzberg S.L."/>
            <person name="Sandelin A."/>
            <person name="Schneider C."/>
            <person name="Schoenbach C."/>
            <person name="Sekiguchi K."/>
            <person name="Semple C.A."/>
            <person name="Seno S."/>
            <person name="Sessa L."/>
            <person name="Sheng Y."/>
            <person name="Shibata Y."/>
            <person name="Shimada H."/>
            <person name="Shimada K."/>
            <person name="Silva D."/>
            <person name="Sinclair B."/>
            <person name="Sperling S."/>
            <person name="Stupka E."/>
            <person name="Sugiura K."/>
            <person name="Sultana R."/>
            <person name="Takenaka Y."/>
            <person name="Taki K."/>
            <person name="Tammoja K."/>
            <person name="Tan S.L."/>
            <person name="Tang S."/>
            <person name="Taylor M.S."/>
            <person name="Tegner J."/>
            <person name="Teichmann S.A."/>
            <person name="Ueda H.R."/>
            <person name="van Nimwegen E."/>
            <person name="Verardo R."/>
            <person name="Wei C.L."/>
            <person name="Yagi K."/>
            <person name="Yamanishi H."/>
            <person name="Zabarovsky E."/>
            <person name="Zhu S."/>
            <person name="Zimmer A."/>
            <person name="Hide W."/>
            <person name="Bult C."/>
            <person name="Grimmond S.M."/>
            <person name="Teasdale R.D."/>
            <person name="Liu E.T."/>
            <person name="Brusic V."/>
            <person name="Quackenbush J."/>
            <person name="Wahlestedt C."/>
            <person name="Mattick J.S."/>
            <person name="Hume D.A."/>
            <person name="Kai C."/>
            <person name="Sasaki D."/>
            <person name="Tomaru Y."/>
            <person name="Fukuda S."/>
            <person name="Kanamori-Katayama M."/>
            <person name="Suzuki M."/>
            <person name="Aoki J."/>
            <person name="Arakawa T."/>
            <person name="Iida J."/>
            <person name="Imamura K."/>
            <person name="Itoh M."/>
            <person name="Kato T."/>
            <person name="Kawaji H."/>
            <person name="Kawagashira N."/>
            <person name="Kawashima T."/>
            <person name="Kojima M."/>
            <person name="Kondo S."/>
            <person name="Konno H."/>
            <person name="Nakano K."/>
            <person name="Ninomiya N."/>
            <person name="Nishio T."/>
            <person name="Okada M."/>
            <person name="Plessy C."/>
            <person name="Shibata K."/>
            <person name="Shiraki T."/>
            <person name="Suzuki S."/>
            <person name="Tagami M."/>
            <person name="Waki K."/>
            <person name="Watahiki A."/>
            <person name="Okamura-Oho Y."/>
            <person name="Suzuki H."/>
            <person name="Kawai J."/>
            <person name="Hayashizaki Y."/>
        </authorList>
    </citation>
    <scope>NUCLEOTIDE SEQUENCE [LARGE SCALE MRNA]</scope>
    <source>
        <strain>C57BL/6J</strain>
        <tissue>Retina</tissue>
        <tissue>Skin</tissue>
        <tissue>Testis</tissue>
        <tissue>Wolffian duct</tissue>
    </source>
</reference>
<reference key="2">
    <citation type="journal article" date="2004" name="Neuron">
        <title>Identification of PSD-95 palmitoylating enzymes.</title>
        <authorList>
            <person name="Fukata M."/>
            <person name="Fukata Y."/>
            <person name="Adesnik H."/>
            <person name="Nicoll R.A."/>
            <person name="Bredt D.S."/>
        </authorList>
    </citation>
    <scope>FUNCTION</scope>
    <scope>CATALYTIC ACTIVITY</scope>
    <scope>PALMITOYLATION</scope>
    <scope>TISSUE SPECIFICITY</scope>
    <scope>ACTIVITY REGULATION</scope>
    <scope>MUTAGENESIS OF 156-ASP-HIS-157 AND CYS-159</scope>
    <scope>ACTIVE SITE</scope>
    <scope>DOMAIN</scope>
</reference>
<reference key="3">
    <citation type="journal article" date="2006" name="Methods">
        <title>Systematic screening for palmitoyl transferase activity of the DHHC protein family in mammalian cells.</title>
        <authorList>
            <person name="Fukata Y."/>
            <person name="Iwanaga T."/>
            <person name="Fukata M."/>
        </authorList>
    </citation>
    <scope>FUNCTION</scope>
</reference>
<reference key="4">
    <citation type="journal article" date="2008" name="J. Biol. Chem.">
        <title>Palmitoylation and membrane interactions of the neuroprotective chaperone cysteine-string protein.</title>
        <authorList>
            <person name="Greaves J."/>
            <person name="Salaun C."/>
            <person name="Fukata Y."/>
            <person name="Fukata M."/>
            <person name="Chamberlain L.H."/>
        </authorList>
    </citation>
    <scope>FUNCTION</scope>
    <scope>SUBCELLULAR LOCATION</scope>
</reference>
<reference key="5">
    <citation type="journal article" date="2017" name="Proc. Natl. Acad. Sci. U.S.A.">
        <title>Molecular basis of fatty acid selectivity in the zDHHC family of S-acyltransferases revealed by click chemistry.</title>
        <authorList>
            <person name="Greaves J."/>
            <person name="Munro K.R."/>
            <person name="Davidson S.C."/>
            <person name="Riviere M."/>
            <person name="Wojno J."/>
            <person name="Smith T.K."/>
            <person name="Tomkinson N.C."/>
            <person name="Chamberlain L.H."/>
        </authorList>
    </citation>
    <scope>FUNCTION</scope>
    <scope>CATALYTIC ACTIVITY</scope>
    <scope>SUBSTRATE SPECIFICITY</scope>
</reference>
<reference key="6">
    <citation type="journal article" date="2021" name="FASEB J.">
        <title>Posttranslational regulation of CALHM1/3 channel: N-linked glycosylation and S-palmitoylation.</title>
        <authorList>
            <person name="Okui M."/>
            <person name="Murakami T."/>
            <person name="Sun H."/>
            <person name="Ikeshita C."/>
            <person name="Kanamura N."/>
            <person name="Taruno A."/>
        </authorList>
    </citation>
    <scope>FUNCTION</scope>
</reference>
<protein>
    <recommendedName>
        <fullName evidence="11">Palmitoyltransferase ZDHHC15</fullName>
        <ecNumber evidence="6">2.3.1.225</ecNumber>
    </recommendedName>
    <alternativeName>
        <fullName evidence="13">Acyltransferase ZDHHC15</fullName>
        <ecNumber evidence="13">2.3.1.-</ecNumber>
    </alternativeName>
    <alternativeName>
        <fullName>Zinc finger DHHC domain-containing protein 15</fullName>
        <shortName>DHHC-15</shortName>
    </alternativeName>
</protein>
<evidence type="ECO:0000250" key="1">
    <source>
        <dbReference type="UniProtKB" id="F1QXD3"/>
    </source>
</evidence>
<evidence type="ECO:0000250" key="2">
    <source>
        <dbReference type="UniProtKB" id="Q2TGJ4"/>
    </source>
</evidence>
<evidence type="ECO:0000250" key="3">
    <source>
        <dbReference type="UniProtKB" id="Q96MV8"/>
    </source>
</evidence>
<evidence type="ECO:0000255" key="4">
    <source>
        <dbReference type="PROSITE-ProRule" id="PRU00067"/>
    </source>
</evidence>
<evidence type="ECO:0000256" key="5">
    <source>
        <dbReference type="SAM" id="MobiDB-lite"/>
    </source>
</evidence>
<evidence type="ECO:0000269" key="6">
    <source>
    </source>
</evidence>
<evidence type="ECO:0000269" key="7">
    <source>
    </source>
</evidence>
<evidence type="ECO:0000269" key="8">
    <source>
    </source>
</evidence>
<evidence type="ECO:0000269" key="9">
    <source>
    </source>
</evidence>
<evidence type="ECO:0000269" key="10">
    <source>
    </source>
</evidence>
<evidence type="ECO:0000305" key="11"/>
<evidence type="ECO:0000305" key="12">
    <source>
    </source>
</evidence>
<evidence type="ECO:0000305" key="13">
    <source>
    </source>
</evidence>
<evidence type="ECO:0000312" key="14">
    <source>
        <dbReference type="MGI" id="MGI:1915336"/>
    </source>
</evidence>
<gene>
    <name evidence="14" type="primary">Zdhhc15</name>
</gene>
<accession>Q8BGJ0</accession>
<accession>Q3TV63</accession>
<accession>Q8BMB7</accession>
<name>ZDH15_MOUSE</name>
<dbReference type="EC" id="2.3.1.225" evidence="6"/>
<dbReference type="EC" id="2.3.1.-" evidence="13"/>
<dbReference type="EMBL" id="AK029137">
    <property type="protein sequence ID" value="BAC26317.1"/>
    <property type="molecule type" value="mRNA"/>
</dbReference>
<dbReference type="EMBL" id="AK032922">
    <property type="protein sequence ID" value="BAC28087.1"/>
    <property type="molecule type" value="mRNA"/>
</dbReference>
<dbReference type="EMBL" id="AK077949">
    <property type="protein sequence ID" value="BAC37081.1"/>
    <property type="molecule type" value="mRNA"/>
</dbReference>
<dbReference type="EMBL" id="AK160360">
    <property type="protein sequence ID" value="BAE35757.1"/>
    <property type="molecule type" value="mRNA"/>
</dbReference>
<dbReference type="CCDS" id="CCDS30332.1"/>
<dbReference type="RefSeq" id="NP_780567.1">
    <property type="nucleotide sequence ID" value="NM_175358.4"/>
</dbReference>
<dbReference type="SMR" id="Q8BGJ0"/>
<dbReference type="BioGRID" id="224365">
    <property type="interactions" value="3"/>
</dbReference>
<dbReference type="FunCoup" id="Q8BGJ0">
    <property type="interactions" value="555"/>
</dbReference>
<dbReference type="IntAct" id="Q8BGJ0">
    <property type="interactions" value="2"/>
</dbReference>
<dbReference type="STRING" id="10090.ENSMUSP00000047615"/>
<dbReference type="PhosphoSitePlus" id="Q8BGJ0"/>
<dbReference type="SwissPalm" id="Q8BGJ0"/>
<dbReference type="PaxDb" id="10090-ENSMUSP00000047615"/>
<dbReference type="PeptideAtlas" id="Q8BGJ0"/>
<dbReference type="ProteomicsDB" id="275136"/>
<dbReference type="Antibodypedia" id="13846">
    <property type="antibodies" value="91 antibodies from 21 providers"/>
</dbReference>
<dbReference type="DNASU" id="108672"/>
<dbReference type="Ensembl" id="ENSMUST00000042070.6">
    <property type="protein sequence ID" value="ENSMUSP00000047615.6"/>
    <property type="gene ID" value="ENSMUSG00000033906.6"/>
</dbReference>
<dbReference type="GeneID" id="108672"/>
<dbReference type="KEGG" id="mmu:108672"/>
<dbReference type="UCSC" id="uc009uaj.2">
    <property type="organism name" value="mouse"/>
</dbReference>
<dbReference type="AGR" id="MGI:1915336"/>
<dbReference type="CTD" id="158866"/>
<dbReference type="MGI" id="MGI:1915336">
    <property type="gene designation" value="Zdhhc15"/>
</dbReference>
<dbReference type="VEuPathDB" id="HostDB:ENSMUSG00000033906"/>
<dbReference type="eggNOG" id="KOG1315">
    <property type="taxonomic scope" value="Eukaryota"/>
</dbReference>
<dbReference type="GeneTree" id="ENSGT00940000158214"/>
<dbReference type="HOGENOM" id="CLU_027721_1_1_1"/>
<dbReference type="InParanoid" id="Q8BGJ0"/>
<dbReference type="OMA" id="NCYSSFP"/>
<dbReference type="OrthoDB" id="9909019at2759"/>
<dbReference type="PhylomeDB" id="Q8BGJ0"/>
<dbReference type="TreeFam" id="TF316044"/>
<dbReference type="BioGRID-ORCS" id="108672">
    <property type="hits" value="2 hits in 78 CRISPR screens"/>
</dbReference>
<dbReference type="PRO" id="PR:Q8BGJ0"/>
<dbReference type="Proteomes" id="UP000000589">
    <property type="component" value="Chromosome X"/>
</dbReference>
<dbReference type="RNAct" id="Q8BGJ0">
    <property type="molecule type" value="protein"/>
</dbReference>
<dbReference type="Bgee" id="ENSMUSG00000033906">
    <property type="expression patterns" value="Expressed in lumbar dorsal root ganglion and 192 other cell types or tissues"/>
</dbReference>
<dbReference type="GO" id="GO:0005794">
    <property type="term" value="C:Golgi apparatus"/>
    <property type="evidence" value="ECO:0000314"/>
    <property type="project" value="UniProtKB"/>
</dbReference>
<dbReference type="GO" id="GO:0000139">
    <property type="term" value="C:Golgi membrane"/>
    <property type="evidence" value="ECO:0000250"/>
    <property type="project" value="UniProtKB"/>
</dbReference>
<dbReference type="GO" id="GO:0098794">
    <property type="term" value="C:postsynapse"/>
    <property type="evidence" value="ECO:0000250"/>
    <property type="project" value="UniProtKB"/>
</dbReference>
<dbReference type="GO" id="GO:0014069">
    <property type="term" value="C:postsynaptic density"/>
    <property type="evidence" value="ECO:0007669"/>
    <property type="project" value="UniProtKB-SubCell"/>
</dbReference>
<dbReference type="GO" id="GO:0016409">
    <property type="term" value="F:palmitoyltransferase activity"/>
    <property type="evidence" value="ECO:0000314"/>
    <property type="project" value="MGI"/>
</dbReference>
<dbReference type="GO" id="GO:0019705">
    <property type="term" value="F:protein-cysteine S-myristoyltransferase activity"/>
    <property type="evidence" value="ECO:0000305"/>
    <property type="project" value="UniProtKB"/>
</dbReference>
<dbReference type="GO" id="GO:0019706">
    <property type="term" value="F:protein-cysteine S-palmitoyltransferase activity"/>
    <property type="evidence" value="ECO:0000314"/>
    <property type="project" value="UniProtKB"/>
</dbReference>
<dbReference type="GO" id="GO:0140439">
    <property type="term" value="F:protein-cysteine S-stearoyltransferase activity"/>
    <property type="evidence" value="ECO:0000305"/>
    <property type="project" value="UniProtKB"/>
</dbReference>
<dbReference type="GO" id="GO:0008270">
    <property type="term" value="F:zinc ion binding"/>
    <property type="evidence" value="ECO:0000250"/>
    <property type="project" value="UniProtKB"/>
</dbReference>
<dbReference type="GO" id="GO:0045184">
    <property type="term" value="P:establishment of protein localization"/>
    <property type="evidence" value="ECO:0000314"/>
    <property type="project" value="MGI"/>
</dbReference>
<dbReference type="GO" id="GO:0018230">
    <property type="term" value="P:peptidyl-L-cysteine S-palmitoylation"/>
    <property type="evidence" value="ECO:0000314"/>
    <property type="project" value="UniProtKB"/>
</dbReference>
<dbReference type="GO" id="GO:1900006">
    <property type="term" value="P:positive regulation of dendrite development"/>
    <property type="evidence" value="ECO:0000250"/>
    <property type="project" value="UniProtKB"/>
</dbReference>
<dbReference type="GO" id="GO:0072657">
    <property type="term" value="P:protein localization to membrane"/>
    <property type="evidence" value="ECO:0000250"/>
    <property type="project" value="UniProtKB"/>
</dbReference>
<dbReference type="GO" id="GO:0018345">
    <property type="term" value="P:protein palmitoylation"/>
    <property type="evidence" value="ECO:0000314"/>
    <property type="project" value="UniProtKB"/>
</dbReference>
<dbReference type="GO" id="GO:0140450">
    <property type="term" value="P:protein targeting to Golgi apparatus"/>
    <property type="evidence" value="ECO:0000250"/>
    <property type="project" value="UniProtKB"/>
</dbReference>
<dbReference type="GO" id="GO:0061001">
    <property type="term" value="P:regulation of dendritic spine morphogenesis"/>
    <property type="evidence" value="ECO:0000250"/>
    <property type="project" value="UniProtKB"/>
</dbReference>
<dbReference type="GO" id="GO:0016188">
    <property type="term" value="P:synaptic vesicle maturation"/>
    <property type="evidence" value="ECO:0000315"/>
    <property type="project" value="MGI"/>
</dbReference>
<dbReference type="InterPro" id="IPR001594">
    <property type="entry name" value="Palmitoyltrfase_DHHC"/>
</dbReference>
<dbReference type="InterPro" id="IPR039859">
    <property type="entry name" value="PFA4/ZDH16/20/ERF2-like"/>
</dbReference>
<dbReference type="PANTHER" id="PTHR12246">
    <property type="entry name" value="PALMITOYLTRANSFERASE ZDHHC16"/>
    <property type="match status" value="1"/>
</dbReference>
<dbReference type="Pfam" id="PF01529">
    <property type="entry name" value="DHHC"/>
    <property type="match status" value="1"/>
</dbReference>
<dbReference type="PROSITE" id="PS50216">
    <property type="entry name" value="DHHC"/>
    <property type="match status" value="1"/>
</dbReference>
<keyword id="KW-0012">Acyltransferase</keyword>
<keyword id="KW-0333">Golgi apparatus</keyword>
<keyword id="KW-0449">Lipoprotein</keyword>
<keyword id="KW-0472">Membrane</keyword>
<keyword id="KW-0479">Metal-binding</keyword>
<keyword id="KW-0564">Palmitate</keyword>
<keyword id="KW-1185">Reference proteome</keyword>
<keyword id="KW-0770">Synapse</keyword>
<keyword id="KW-0808">Transferase</keyword>
<keyword id="KW-0812">Transmembrane</keyword>
<keyword id="KW-1133">Transmembrane helix</keyword>
<keyword id="KW-0862">Zinc</keyword>
<proteinExistence type="evidence at protein level"/>
<sequence>MRRGWKMALSGGLRCCRRVLSWVPVLVIVLVVLWSYYAYVFELCLVTVLSPAEKVIYLILYHAIFVFFAWTYWKSIFTLPQQPNQKFHLSYTDKERYKNEERPEVQKQMLVDMAKKLPVYTRTGSGAVRFCDRCHLIKPDRCHHCSVCAMCVLKMDHHCPWVNNCIGFSNYKFFLQFLAYSVLYCLYIATTVFSYFIKYWRGELPSVRSKFHVLFLLFVACMFFVSLVILFGYHCWLVSRNKTTLEAFCTPVFTSGPEKNGFNLGFIKNIQQVFGDNKKFWLIPIGSSPGDGHSFPMRSMNESQNPLLANEEPWEDNEDDSRDYPEGSSSLAVESET</sequence>
<comment type="function">
    <text evidence="1 3 6 7 8 9 10 13">Palmitoyltransferase that catalyzes the addition of palmitate onto various protein substrates (PubMed:15603741, PubMed:17012030, PubMed:28167757). Has no stringent fatty acid selectivity and in addition to palmitate can also transfer onto target proteins myristate from tetradecanoyl-CoA and stearate from octadecanoyl-CoA (Probable). Palmitoylates IGF2R and SORT1, promoting their partitioning to an endosomal membrane subdomain where they can interact with the retromer cargo-selective complex (By similarity). Thereby, regulates retrograde transport from endosomes to the Golgi apparatus of these lysosomal sorting receptors and plays a role in trafficking of lysosomal proteins (By similarity). In the nervous system, catalyzes the palmitoylation of DLG4/PSD95 and regulates its synaptic clustering and function in synaptogenesis (PubMed:15603741). Could be involved in the differentiation of dopaminergic neurons and the development of the diencephalon (By similarity). Could also catalyze the palmitoylation of GAP43 (PubMed:15603741, PubMed:17012030). Could also palmitoylate DNAJC5 and regulate its localization to the Golgi membrane (PubMed:18596047). Could also palmitoylate FYN as shown in vitro (By similarity). May palmitoylate CALHM3 subunit of gustatory voltage-gated ion channels and modulate channel gating and kinetics.</text>
</comment>
<comment type="catalytic activity">
    <reaction evidence="6">
        <text>L-cysteinyl-[protein] + hexadecanoyl-CoA = S-hexadecanoyl-L-cysteinyl-[protein] + CoA</text>
        <dbReference type="Rhea" id="RHEA:36683"/>
        <dbReference type="Rhea" id="RHEA-COMP:10131"/>
        <dbReference type="Rhea" id="RHEA-COMP:11032"/>
        <dbReference type="ChEBI" id="CHEBI:29950"/>
        <dbReference type="ChEBI" id="CHEBI:57287"/>
        <dbReference type="ChEBI" id="CHEBI:57379"/>
        <dbReference type="ChEBI" id="CHEBI:74151"/>
        <dbReference type="EC" id="2.3.1.225"/>
    </reaction>
    <physiologicalReaction direction="left-to-right" evidence="6">
        <dbReference type="Rhea" id="RHEA:36684"/>
    </physiologicalReaction>
</comment>
<comment type="catalytic activity">
    <reaction evidence="13">
        <text>L-cysteinyl-[protein] + tetradecanoyl-CoA = S-tetradecanoyl-L-cysteinyl-[protein] + CoA</text>
        <dbReference type="Rhea" id="RHEA:59736"/>
        <dbReference type="Rhea" id="RHEA-COMP:10131"/>
        <dbReference type="Rhea" id="RHEA-COMP:15433"/>
        <dbReference type="ChEBI" id="CHEBI:29950"/>
        <dbReference type="ChEBI" id="CHEBI:57287"/>
        <dbReference type="ChEBI" id="CHEBI:57385"/>
        <dbReference type="ChEBI" id="CHEBI:143199"/>
    </reaction>
    <physiologicalReaction direction="left-to-right" evidence="13">
        <dbReference type="Rhea" id="RHEA:59737"/>
    </physiologicalReaction>
</comment>
<comment type="catalytic activity">
    <reaction evidence="13">
        <text>L-cysteinyl-[protein] + octadecanoyl-CoA = S-octadecanoyl-L-cysteinyl-[protein] + CoA</text>
        <dbReference type="Rhea" id="RHEA:59740"/>
        <dbReference type="Rhea" id="RHEA-COMP:10131"/>
        <dbReference type="Rhea" id="RHEA-COMP:15434"/>
        <dbReference type="ChEBI" id="CHEBI:29950"/>
        <dbReference type="ChEBI" id="CHEBI:57287"/>
        <dbReference type="ChEBI" id="CHEBI:57394"/>
        <dbReference type="ChEBI" id="CHEBI:143200"/>
    </reaction>
    <physiologicalReaction direction="left-to-right" evidence="13">
        <dbReference type="Rhea" id="RHEA:59741"/>
    </physiologicalReaction>
</comment>
<comment type="activity regulation">
    <text evidence="6">Inhibited by 2-bromopalmitate.</text>
</comment>
<comment type="subcellular location">
    <subcellularLocation>
        <location evidence="8">Golgi apparatus membrane</location>
        <topology evidence="1">Multi-pass membrane protein</topology>
    </subcellularLocation>
    <subcellularLocation>
        <location evidence="2">Postsynaptic density</location>
    </subcellularLocation>
</comment>
<comment type="tissue specificity">
    <text evidence="6">Expressed mainly in brain.</text>
</comment>
<comment type="domain">
    <text evidence="6">The DHHC domain is required for palmitoyltransferase activity.</text>
</comment>
<comment type="PTM">
    <text evidence="6">Autopalmitoylated (in vitro).</text>
</comment>
<comment type="similarity">
    <text evidence="11">Belongs to the DHHC palmitoyltransferase family.</text>
</comment>
<feature type="chain" id="PRO_0000212894" description="Palmitoyltransferase ZDHHC15">
    <location>
        <begin position="1"/>
        <end position="337"/>
    </location>
</feature>
<feature type="topological domain" description="Cytoplasmic" evidence="1">
    <location>
        <begin position="1"/>
        <end position="20"/>
    </location>
</feature>
<feature type="transmembrane region" description="Helical" evidence="1">
    <location>
        <begin position="21"/>
        <end position="41"/>
    </location>
</feature>
<feature type="topological domain" description="Lumenal" evidence="1">
    <location>
        <begin position="42"/>
        <end position="56"/>
    </location>
</feature>
<feature type="transmembrane region" description="Helical" evidence="1">
    <location>
        <begin position="57"/>
        <end position="77"/>
    </location>
</feature>
<feature type="topological domain" description="Cytoplasmic" evidence="1">
    <location>
        <begin position="78"/>
        <end position="172"/>
    </location>
</feature>
<feature type="transmembrane region" description="Helical" evidence="1">
    <location>
        <begin position="173"/>
        <end position="193"/>
    </location>
</feature>
<feature type="topological domain" description="Lumenal" evidence="1">
    <location>
        <begin position="194"/>
        <end position="210"/>
    </location>
</feature>
<feature type="transmembrane region" description="Helical" evidence="1">
    <location>
        <begin position="211"/>
        <end position="234"/>
    </location>
</feature>
<feature type="topological domain" description="Cytoplasmic" evidence="1">
    <location>
        <begin position="235"/>
        <end position="337"/>
    </location>
</feature>
<feature type="domain" description="DHHC" evidence="4">
    <location>
        <begin position="129"/>
        <end position="179"/>
    </location>
</feature>
<feature type="region of interest" description="Disordered" evidence="5">
    <location>
        <begin position="293"/>
        <end position="337"/>
    </location>
</feature>
<feature type="compositionally biased region" description="Acidic residues" evidence="5">
    <location>
        <begin position="312"/>
        <end position="321"/>
    </location>
</feature>
<feature type="compositionally biased region" description="Polar residues" evidence="5">
    <location>
        <begin position="327"/>
        <end position="337"/>
    </location>
</feature>
<feature type="active site" description="S-palmitoyl cysteine intermediate" evidence="4 12">
    <location>
        <position position="159"/>
    </location>
</feature>
<feature type="binding site" evidence="1">
    <location>
        <position position="131"/>
    </location>
    <ligand>
        <name>Zn(2+)</name>
        <dbReference type="ChEBI" id="CHEBI:29105"/>
        <label>1</label>
    </ligand>
</feature>
<feature type="binding site" evidence="1">
    <location>
        <position position="134"/>
    </location>
    <ligand>
        <name>Zn(2+)</name>
        <dbReference type="ChEBI" id="CHEBI:29105"/>
        <label>1</label>
    </ligand>
</feature>
<feature type="binding site" evidence="1">
    <location>
        <position position="144"/>
    </location>
    <ligand>
        <name>Zn(2+)</name>
        <dbReference type="ChEBI" id="CHEBI:29105"/>
        <label>1</label>
    </ligand>
</feature>
<feature type="binding site" evidence="1">
    <location>
        <position position="145"/>
    </location>
    <ligand>
        <name>Zn(2+)</name>
        <dbReference type="ChEBI" id="CHEBI:29105"/>
        <label>2</label>
    </ligand>
</feature>
<feature type="binding site" evidence="1">
    <location>
        <position position="148"/>
    </location>
    <ligand>
        <name>Zn(2+)</name>
        <dbReference type="ChEBI" id="CHEBI:29105"/>
        <label>2</label>
    </ligand>
</feature>
<feature type="binding site" evidence="1">
    <location>
        <position position="151"/>
    </location>
    <ligand>
        <name>Zn(2+)</name>
        <dbReference type="ChEBI" id="CHEBI:29105"/>
        <label>1</label>
    </ligand>
</feature>
<feature type="binding site" evidence="1">
    <location>
        <position position="158"/>
    </location>
    <ligand>
        <name>Zn(2+)</name>
        <dbReference type="ChEBI" id="CHEBI:29105"/>
        <label>2</label>
    </ligand>
</feature>
<feature type="binding site" evidence="1">
    <location>
        <position position="165"/>
    </location>
    <ligand>
        <name>Zn(2+)</name>
        <dbReference type="ChEBI" id="CHEBI:29105"/>
        <label>2</label>
    </ligand>
</feature>
<feature type="mutagenesis site" description="Fails to enhance DLG4 palmitoylation." evidence="6">
    <original>DH</original>
    <variation>AA</variation>
    <location>
        <begin position="156"/>
        <end position="157"/>
    </location>
</feature>
<feature type="mutagenesis site" description="Fails to enhance DLG4 palmitoylation." evidence="6">
    <original>C</original>
    <variation>S</variation>
    <location>
        <position position="159"/>
    </location>
</feature>